<feature type="chain" id="PRO_0000247301" description="Calcium-transporting ATPase 3, plasma membrane-type">
    <location>
        <begin position="1"/>
        <end position="1033"/>
    </location>
</feature>
<feature type="topological domain" description="Cytoplasmic" evidence="2">
    <location>
        <begin position="1"/>
        <end position="180"/>
    </location>
</feature>
<feature type="transmembrane region" description="Helical" evidence="2">
    <location>
        <begin position="181"/>
        <end position="201"/>
    </location>
</feature>
<feature type="transmembrane region" description="Helical" evidence="2">
    <location>
        <begin position="204"/>
        <end position="224"/>
    </location>
</feature>
<feature type="topological domain" description="Cytoplasmic" evidence="2">
    <location>
        <begin position="225"/>
        <end position="268"/>
    </location>
</feature>
<feature type="transmembrane region" description="Helical" evidence="2">
    <location>
        <begin position="269"/>
        <end position="289"/>
    </location>
</feature>
<feature type="transmembrane region" description="Helical" evidence="2">
    <location>
        <begin position="362"/>
        <end position="382"/>
    </location>
</feature>
<feature type="topological domain" description="Cytoplasmic" evidence="2">
    <location>
        <begin position="383"/>
        <end position="405"/>
    </location>
</feature>
<feature type="transmembrane region" description="Helical" evidence="2">
    <location>
        <begin position="406"/>
        <end position="426"/>
    </location>
</feature>
<feature type="transmembrane region" description="Helical" evidence="2">
    <location>
        <begin position="823"/>
        <end position="843"/>
    </location>
</feature>
<feature type="topological domain" description="Cytoplasmic" evidence="2">
    <location>
        <begin position="844"/>
        <end position="846"/>
    </location>
</feature>
<feature type="transmembrane region" description="Helical" evidence="2">
    <location>
        <begin position="847"/>
        <end position="867"/>
    </location>
</feature>
<feature type="transmembrane region" description="Helical" evidence="2">
    <location>
        <begin position="928"/>
        <end position="948"/>
    </location>
</feature>
<feature type="topological domain" description="Cytoplasmic" evidence="2">
    <location>
        <begin position="949"/>
        <end position="965"/>
    </location>
</feature>
<feature type="transmembrane region" description="Helical" evidence="2">
    <location>
        <begin position="966"/>
        <end position="986"/>
    </location>
</feature>
<feature type="transmembrane region" description="Helical" evidence="2">
    <location>
        <begin position="999"/>
        <end position="1019"/>
    </location>
</feature>
<feature type="topological domain" description="Cytoplasmic" evidence="2">
    <location>
        <begin position="1020"/>
        <end position="1033"/>
    </location>
</feature>
<feature type="active site" description="4-aspartylphosphate intermediate" evidence="1">
    <location>
        <position position="461"/>
    </location>
</feature>
<feature type="binding site" evidence="1">
    <location>
        <position position="762"/>
    </location>
    <ligand>
        <name>Mg(2+)</name>
        <dbReference type="ChEBI" id="CHEBI:18420"/>
    </ligand>
</feature>
<feature type="binding site" evidence="1">
    <location>
        <position position="766"/>
    </location>
    <ligand>
        <name>Mg(2+)</name>
        <dbReference type="ChEBI" id="CHEBI:18420"/>
    </ligand>
</feature>
<feature type="sequence conflict" description="In Ref. 5; AK065088." evidence="4" ref="5">
    <original>R</original>
    <variation>P</variation>
    <location>
        <position position="750"/>
    </location>
</feature>
<reference key="1">
    <citation type="journal article" date="2005" name="Genome Res.">
        <title>Sequence, annotation, and analysis of synteny between rice chromosome 3 and diverged grass species.</title>
        <authorList>
            <consortium name="The rice chromosome 3 sequencing consortium"/>
            <person name="Buell C.R."/>
            <person name="Yuan Q."/>
            <person name="Ouyang S."/>
            <person name="Liu J."/>
            <person name="Zhu W."/>
            <person name="Wang A."/>
            <person name="Maiti R."/>
            <person name="Haas B."/>
            <person name="Wortman J."/>
            <person name="Pertea M."/>
            <person name="Jones K.M."/>
            <person name="Kim M."/>
            <person name="Overton L."/>
            <person name="Tsitrin T."/>
            <person name="Fadrosh D."/>
            <person name="Bera J."/>
            <person name="Weaver B."/>
            <person name="Jin S."/>
            <person name="Johri S."/>
            <person name="Reardon M."/>
            <person name="Webb K."/>
            <person name="Hill J."/>
            <person name="Moffat K."/>
            <person name="Tallon L."/>
            <person name="Van Aken S."/>
            <person name="Lewis M."/>
            <person name="Utterback T."/>
            <person name="Feldblyum T."/>
            <person name="Zismann V."/>
            <person name="Iobst S."/>
            <person name="Hsiao J."/>
            <person name="de Vazeille A.R."/>
            <person name="Salzberg S.L."/>
            <person name="White O."/>
            <person name="Fraser C.M."/>
            <person name="Yu Y."/>
            <person name="Kim H."/>
            <person name="Rambo T."/>
            <person name="Currie J."/>
            <person name="Collura K."/>
            <person name="Kernodle-Thompson S."/>
            <person name="Wei F."/>
            <person name="Kudrna K."/>
            <person name="Ammiraju J.S.S."/>
            <person name="Luo M."/>
            <person name="Goicoechea J.L."/>
            <person name="Wing R.A."/>
            <person name="Henry D."/>
            <person name="Oates R."/>
            <person name="Palmer M."/>
            <person name="Pries G."/>
            <person name="Saski C."/>
            <person name="Simmons J."/>
            <person name="Soderlund C."/>
            <person name="Nelson W."/>
            <person name="de la Bastide M."/>
            <person name="Spiegel L."/>
            <person name="Nascimento L."/>
            <person name="Huang E."/>
            <person name="Preston R."/>
            <person name="Zutavern T."/>
            <person name="Palmer L."/>
            <person name="O'Shaughnessy A."/>
            <person name="Dike S."/>
            <person name="McCombie W.R."/>
            <person name="Minx P."/>
            <person name="Cordum H."/>
            <person name="Wilson R."/>
            <person name="Jin W."/>
            <person name="Lee H.R."/>
            <person name="Jiang J."/>
            <person name="Jackson S."/>
        </authorList>
    </citation>
    <scope>NUCLEOTIDE SEQUENCE [LARGE SCALE GENOMIC DNA]</scope>
    <source>
        <strain>cv. Nipponbare</strain>
    </source>
</reference>
<reference key="2">
    <citation type="journal article" date="2005" name="Nature">
        <title>The map-based sequence of the rice genome.</title>
        <authorList>
            <consortium name="International rice genome sequencing project (IRGSP)"/>
        </authorList>
    </citation>
    <scope>NUCLEOTIDE SEQUENCE [LARGE SCALE GENOMIC DNA]</scope>
    <source>
        <strain>cv. Nipponbare</strain>
    </source>
</reference>
<reference key="3">
    <citation type="journal article" date="2008" name="Nucleic Acids Res.">
        <title>The rice annotation project database (RAP-DB): 2008 update.</title>
        <authorList>
            <consortium name="The rice annotation project (RAP)"/>
        </authorList>
    </citation>
    <scope>GENOME REANNOTATION</scope>
    <source>
        <strain>cv. Nipponbare</strain>
    </source>
</reference>
<reference key="4">
    <citation type="journal article" date="2013" name="Rice">
        <title>Improvement of the Oryza sativa Nipponbare reference genome using next generation sequence and optical map data.</title>
        <authorList>
            <person name="Kawahara Y."/>
            <person name="de la Bastide M."/>
            <person name="Hamilton J.P."/>
            <person name="Kanamori H."/>
            <person name="McCombie W.R."/>
            <person name="Ouyang S."/>
            <person name="Schwartz D.C."/>
            <person name="Tanaka T."/>
            <person name="Wu J."/>
            <person name="Zhou S."/>
            <person name="Childs K.L."/>
            <person name="Davidson R.M."/>
            <person name="Lin H."/>
            <person name="Quesada-Ocampo L."/>
            <person name="Vaillancourt B."/>
            <person name="Sakai H."/>
            <person name="Lee S.S."/>
            <person name="Kim J."/>
            <person name="Numa H."/>
            <person name="Itoh T."/>
            <person name="Buell C.R."/>
            <person name="Matsumoto T."/>
        </authorList>
    </citation>
    <scope>GENOME REANNOTATION</scope>
    <source>
        <strain>cv. Nipponbare</strain>
    </source>
</reference>
<reference key="5">
    <citation type="journal article" date="2003" name="Science">
        <title>Collection, mapping, and annotation of over 28,000 cDNA clones from japonica rice.</title>
        <authorList>
            <consortium name="The rice full-length cDNA consortium"/>
        </authorList>
    </citation>
    <scope>NUCLEOTIDE SEQUENCE [LARGE SCALE MRNA]</scope>
    <source>
        <strain>cv. Nipponbare</strain>
    </source>
</reference>
<reference key="6">
    <citation type="journal article" date="2014" name="FEBS J.">
        <title>Genome-wide expressional and functional analysis of calcium transport elements during abiotic stress and development in rice.</title>
        <authorList>
            <person name="Singh A."/>
            <person name="Kanwar P."/>
            <person name="Yadav A.K."/>
            <person name="Mishra M."/>
            <person name="Jha S.K."/>
            <person name="Baranwal V."/>
            <person name="Pandey A."/>
            <person name="Kapoor S."/>
            <person name="Tyagi A.K."/>
            <person name="Pandey G.K."/>
        </authorList>
    </citation>
    <scope>GENE FAMILY</scope>
    <scope>NOMENCLATURE</scope>
</reference>
<accession>Q6ATV4</accession>
<accession>A0A0P0W069</accession>
<accession>Q10GR4</accession>
<proteinExistence type="evidence at transcript level"/>
<keyword id="KW-0067">ATP-binding</keyword>
<keyword id="KW-0106">Calcium</keyword>
<keyword id="KW-0109">Calcium transport</keyword>
<keyword id="KW-0112">Calmodulin-binding</keyword>
<keyword id="KW-0406">Ion transport</keyword>
<keyword id="KW-0460">Magnesium</keyword>
<keyword id="KW-0472">Membrane</keyword>
<keyword id="KW-0479">Metal-binding</keyword>
<keyword id="KW-0547">Nucleotide-binding</keyword>
<keyword id="KW-0597">Phosphoprotein</keyword>
<keyword id="KW-1185">Reference proteome</keyword>
<keyword id="KW-1278">Translocase</keyword>
<keyword id="KW-0812">Transmembrane</keyword>
<keyword id="KW-1133">Transmembrane helix</keyword>
<keyword id="KW-0813">Transport</keyword>
<sequence>MHSGVNGCCPLRLPAAAAVHGRRIPPLLPPRGAWPGCIAAPALHRKPGRGGGGALSSCRRASHHEKLQVAALPSKATLEFEHGVSLRSAYIVPEDVQAAGFQIDADELASIVESRDTKKLTVHGQLNGIADKLGTSLTNGIVTDKDLLNQRQDIYGVNKFAETEIRSFWEFVWEALEDTTLIILSACAIFSLVVGITTEGWPQGAHDGVGIVASILLVVSVTGTSNYQQSLQFRDLDKEKRKILVQVTRNGLRQRVLIDDLLPGDAVHLAVGDQVPADGLFISGFSVLVDESSLTGESEPVFVNEDNPYLLSGTKVLDGSCKMLVTAVGMRTQWGKLMAVLTDGGDDETPLQTRLNGVANTIGKIGLFFAVLTFIVLSQGIIGQKYLDGLLLSWSGDDVLEILDHFAVAVTIVVVAVPEGLPLAVTLSLAFAMKKMMNDKALVRQLAACETMGSATVICSDKTGTLTTNRMTVVKACICGNTIQVNNPQTPNMSSNFPEVAVETLLESIFNNTSGEVVTNQDGKYQILGTPTETALLEFALLLDGDCKEKQLGSKIVKVEPFNSTKKRMSTILELPGGGYRAHCKGASEIVLAACDKFIDERGCIVPLDDKTSSKLNDIIKAFSSEALRTLCLAYREMEEGFSTQEQIPLQGYTCIGIVGIKDPVRPGVRQSVATCRSAGISVRMITGDNIDTAKAIARECGILTKDGIAIEGAEFREKSAEELHDLIPKMQVLARSSPLDKHTLVKHLRTAFNEVVAVTGDGTNDAPALREADIGLAMGIAGTEVAKESADVVILDDNFSTIVTVAKWGRSVYVNIQKFVQFQLTVNVVALLVNFTSACFTGDAPLTAVQLLWVNMIMDTLGALALATEPPNNNLMKKAPVGRKGKFITNVMWRNIVGQSLYQFAVMWYLQTQGKHLFGLEGYHADIVLNTIIFNTFVFCQVFNEISSREMEDINVLRGMAGNSIFLGVLTGTIFFQFILVQFLGDFANTTPLTQQQWLISILFGFLGMPIAAAIKLIAVEPHEKADTRRTP</sequence>
<comment type="function">
    <text evidence="1">This magnesium-dependent enzyme catalyzes the hydrolysis of ATP coupled with the translocation of calcium from the cytosol out of the cell, into the endoplasmic reticulum, or into organelles.</text>
</comment>
<comment type="catalytic activity">
    <reaction>
        <text>Ca(2+)(in) + ATP + H2O = Ca(2+)(out) + ADP + phosphate + H(+)</text>
        <dbReference type="Rhea" id="RHEA:18105"/>
        <dbReference type="ChEBI" id="CHEBI:15377"/>
        <dbReference type="ChEBI" id="CHEBI:15378"/>
        <dbReference type="ChEBI" id="CHEBI:29108"/>
        <dbReference type="ChEBI" id="CHEBI:30616"/>
        <dbReference type="ChEBI" id="CHEBI:43474"/>
        <dbReference type="ChEBI" id="CHEBI:456216"/>
        <dbReference type="EC" id="7.2.2.10"/>
    </reaction>
</comment>
<comment type="activity regulation">
    <text>Activated by calmodulin.</text>
</comment>
<comment type="subcellular location">
    <subcellularLocation>
        <location evidence="1">Membrane</location>
        <topology evidence="1">Multi-pass membrane protein</topology>
    </subcellularLocation>
</comment>
<comment type="domain">
    <text>The N-terminus contains an autoinhibitory calmodulin-binding domain, which binds calmodulin in a calcium-dependent fashion.</text>
</comment>
<comment type="similarity">
    <text evidence="4">Belongs to the cation transport ATPase (P-type) (TC 3.A.3) family. Type IIB subfamily.</text>
</comment>
<name>ACA3_ORYSJ</name>
<protein>
    <recommendedName>
        <fullName evidence="4">Calcium-transporting ATPase 3, plasma membrane-type</fullName>
        <shortName evidence="3">OsACA3</shortName>
        <ecNumber>7.2.2.10</ecNumber>
    </recommendedName>
    <alternativeName>
        <fullName evidence="4">Ca(2+)-ATPase isoform 3</fullName>
    </alternativeName>
</protein>
<gene>
    <name evidence="3" type="primary">ACA3</name>
    <name evidence="6" type="ordered locus">Os03g0616400</name>
    <name evidence="5" type="ordered locus">LOC_Os03g42020</name>
    <name type="ORF">OJ1285_H07.3</name>
</gene>
<evidence type="ECO:0000250" key="1"/>
<evidence type="ECO:0000255" key="2"/>
<evidence type="ECO:0000303" key="3">
    <source>
    </source>
</evidence>
<evidence type="ECO:0000305" key="4"/>
<evidence type="ECO:0000312" key="5">
    <source>
        <dbReference type="EMBL" id="ABF97637.1"/>
    </source>
</evidence>
<evidence type="ECO:0000312" key="6">
    <source>
        <dbReference type="EMBL" id="BAF12575.1"/>
    </source>
</evidence>
<organism>
    <name type="scientific">Oryza sativa subsp. japonica</name>
    <name type="common">Rice</name>
    <dbReference type="NCBI Taxonomy" id="39947"/>
    <lineage>
        <taxon>Eukaryota</taxon>
        <taxon>Viridiplantae</taxon>
        <taxon>Streptophyta</taxon>
        <taxon>Embryophyta</taxon>
        <taxon>Tracheophyta</taxon>
        <taxon>Spermatophyta</taxon>
        <taxon>Magnoliopsida</taxon>
        <taxon>Liliopsida</taxon>
        <taxon>Poales</taxon>
        <taxon>Poaceae</taxon>
        <taxon>BOP clade</taxon>
        <taxon>Oryzoideae</taxon>
        <taxon>Oryzeae</taxon>
        <taxon>Oryzinae</taxon>
        <taxon>Oryza</taxon>
        <taxon>Oryza sativa</taxon>
    </lineage>
</organism>
<dbReference type="EC" id="7.2.2.10"/>
<dbReference type="EMBL" id="AC135557">
    <property type="protein sequence ID" value="AAT81659.1"/>
    <property type="molecule type" value="Genomic_DNA"/>
</dbReference>
<dbReference type="EMBL" id="DP000009">
    <property type="protein sequence ID" value="ABF97637.1"/>
    <property type="molecule type" value="Genomic_DNA"/>
</dbReference>
<dbReference type="EMBL" id="AP008209">
    <property type="protein sequence ID" value="BAF12575.1"/>
    <property type="molecule type" value="Genomic_DNA"/>
</dbReference>
<dbReference type="EMBL" id="AP014959">
    <property type="protein sequence ID" value="BAS85276.1"/>
    <property type="molecule type" value="Genomic_DNA"/>
</dbReference>
<dbReference type="EMBL" id="AK065088">
    <property type="status" value="NOT_ANNOTATED_CDS"/>
    <property type="molecule type" value="mRNA"/>
</dbReference>
<dbReference type="SMR" id="Q6ATV4"/>
<dbReference type="FunCoup" id="Q6ATV4">
    <property type="interactions" value="2119"/>
</dbReference>
<dbReference type="STRING" id="39947.Q6ATV4"/>
<dbReference type="PaxDb" id="39947-Q6ATV4"/>
<dbReference type="EnsemblPlants" id="Os03t0616400-01">
    <property type="protein sequence ID" value="Os03t0616400-01"/>
    <property type="gene ID" value="Os03g0616400"/>
</dbReference>
<dbReference type="Gramene" id="Os03t0616400-01">
    <property type="protein sequence ID" value="Os03t0616400-01"/>
    <property type="gene ID" value="Os03g0616400"/>
</dbReference>
<dbReference type="KEGG" id="dosa:Os03g0616400"/>
<dbReference type="eggNOG" id="KOG0204">
    <property type="taxonomic scope" value="Eukaryota"/>
</dbReference>
<dbReference type="HOGENOM" id="CLU_002360_9_2_1"/>
<dbReference type="InParanoid" id="Q6ATV4"/>
<dbReference type="OMA" id="RIICVAY"/>
<dbReference type="Proteomes" id="UP000000763">
    <property type="component" value="Chromosome 3"/>
</dbReference>
<dbReference type="Proteomes" id="UP000059680">
    <property type="component" value="Chromosome 3"/>
</dbReference>
<dbReference type="ExpressionAtlas" id="Q6ATV4">
    <property type="expression patterns" value="baseline and differential"/>
</dbReference>
<dbReference type="GO" id="GO:0043231">
    <property type="term" value="C:intracellular membrane-bounded organelle"/>
    <property type="evidence" value="ECO:0000318"/>
    <property type="project" value="GO_Central"/>
</dbReference>
<dbReference type="GO" id="GO:0005886">
    <property type="term" value="C:plasma membrane"/>
    <property type="evidence" value="ECO:0000318"/>
    <property type="project" value="GO_Central"/>
</dbReference>
<dbReference type="GO" id="GO:0005524">
    <property type="term" value="F:ATP binding"/>
    <property type="evidence" value="ECO:0007669"/>
    <property type="project" value="UniProtKB-KW"/>
</dbReference>
<dbReference type="GO" id="GO:0016887">
    <property type="term" value="F:ATP hydrolysis activity"/>
    <property type="evidence" value="ECO:0007669"/>
    <property type="project" value="InterPro"/>
</dbReference>
<dbReference type="GO" id="GO:0005516">
    <property type="term" value="F:calmodulin binding"/>
    <property type="evidence" value="ECO:0007669"/>
    <property type="project" value="UniProtKB-KW"/>
</dbReference>
<dbReference type="GO" id="GO:0046872">
    <property type="term" value="F:metal ion binding"/>
    <property type="evidence" value="ECO:0007669"/>
    <property type="project" value="UniProtKB-KW"/>
</dbReference>
<dbReference type="GO" id="GO:0005388">
    <property type="term" value="F:P-type calcium transporter activity"/>
    <property type="evidence" value="ECO:0000318"/>
    <property type="project" value="GO_Central"/>
</dbReference>
<dbReference type="CDD" id="cd02081">
    <property type="entry name" value="P-type_ATPase_Ca_PMCA-like"/>
    <property type="match status" value="1"/>
</dbReference>
<dbReference type="FunFam" id="1.20.1110.10:FF:000039">
    <property type="entry name" value="Calcium-transporting ATPase"/>
    <property type="match status" value="1"/>
</dbReference>
<dbReference type="FunFam" id="2.70.150.10:FF:000006">
    <property type="entry name" value="Calcium-transporting ATPase"/>
    <property type="match status" value="1"/>
</dbReference>
<dbReference type="FunFam" id="3.40.1110.10:FF:000011">
    <property type="entry name" value="Calcium-transporting ATPase"/>
    <property type="match status" value="1"/>
</dbReference>
<dbReference type="FunFam" id="3.40.50.1000:FF:000011">
    <property type="entry name" value="Calcium-transporting ATPase"/>
    <property type="match status" value="1"/>
</dbReference>
<dbReference type="Gene3D" id="3.40.1110.10">
    <property type="entry name" value="Calcium-transporting ATPase, cytoplasmic domain N"/>
    <property type="match status" value="1"/>
</dbReference>
<dbReference type="Gene3D" id="2.70.150.10">
    <property type="entry name" value="Calcium-transporting ATPase, cytoplasmic transduction domain A"/>
    <property type="match status" value="1"/>
</dbReference>
<dbReference type="Gene3D" id="1.20.1110.10">
    <property type="entry name" value="Calcium-transporting ATPase, transmembrane domain"/>
    <property type="match status" value="1"/>
</dbReference>
<dbReference type="Gene3D" id="3.40.50.1000">
    <property type="entry name" value="HAD superfamily/HAD-like"/>
    <property type="match status" value="1"/>
</dbReference>
<dbReference type="InterPro" id="IPR006068">
    <property type="entry name" value="ATPase_P-typ_cation-transptr_C"/>
</dbReference>
<dbReference type="InterPro" id="IPR004014">
    <property type="entry name" value="ATPase_P-typ_cation-transptr_N"/>
</dbReference>
<dbReference type="InterPro" id="IPR023299">
    <property type="entry name" value="ATPase_P-typ_cyto_dom_N"/>
</dbReference>
<dbReference type="InterPro" id="IPR018303">
    <property type="entry name" value="ATPase_P-typ_P_site"/>
</dbReference>
<dbReference type="InterPro" id="IPR023298">
    <property type="entry name" value="ATPase_P-typ_TM_dom_sf"/>
</dbReference>
<dbReference type="InterPro" id="IPR008250">
    <property type="entry name" value="ATPase_P-typ_transduc_dom_A_sf"/>
</dbReference>
<dbReference type="InterPro" id="IPR036412">
    <property type="entry name" value="HAD-like_sf"/>
</dbReference>
<dbReference type="InterPro" id="IPR023214">
    <property type="entry name" value="HAD_sf"/>
</dbReference>
<dbReference type="InterPro" id="IPR006408">
    <property type="entry name" value="P-type_ATPase_IIB"/>
</dbReference>
<dbReference type="InterPro" id="IPR001757">
    <property type="entry name" value="P_typ_ATPase"/>
</dbReference>
<dbReference type="InterPro" id="IPR044492">
    <property type="entry name" value="P_typ_ATPase_HD_dom"/>
</dbReference>
<dbReference type="NCBIfam" id="TIGR01517">
    <property type="entry name" value="ATPase-IIB_Ca"/>
    <property type="match status" value="1"/>
</dbReference>
<dbReference type="NCBIfam" id="TIGR01494">
    <property type="entry name" value="ATPase_P-type"/>
    <property type="match status" value="2"/>
</dbReference>
<dbReference type="PANTHER" id="PTHR24093:SF420">
    <property type="entry name" value="CALCIUM-TRANSPORTING ATPASE 3, PLASMA MEMBRANE-TYPE"/>
    <property type="match status" value="1"/>
</dbReference>
<dbReference type="PANTHER" id="PTHR24093">
    <property type="entry name" value="CATION TRANSPORTING ATPASE"/>
    <property type="match status" value="1"/>
</dbReference>
<dbReference type="Pfam" id="PF13246">
    <property type="entry name" value="Cation_ATPase"/>
    <property type="match status" value="1"/>
</dbReference>
<dbReference type="Pfam" id="PF00689">
    <property type="entry name" value="Cation_ATPase_C"/>
    <property type="match status" value="1"/>
</dbReference>
<dbReference type="Pfam" id="PF00690">
    <property type="entry name" value="Cation_ATPase_N"/>
    <property type="match status" value="1"/>
</dbReference>
<dbReference type="Pfam" id="PF00122">
    <property type="entry name" value="E1-E2_ATPase"/>
    <property type="match status" value="1"/>
</dbReference>
<dbReference type="Pfam" id="PF00702">
    <property type="entry name" value="Hydrolase"/>
    <property type="match status" value="1"/>
</dbReference>
<dbReference type="PRINTS" id="PR00119">
    <property type="entry name" value="CATATPASE"/>
</dbReference>
<dbReference type="PRINTS" id="PR00120">
    <property type="entry name" value="HATPASE"/>
</dbReference>
<dbReference type="SFLD" id="SFLDS00003">
    <property type="entry name" value="Haloacid_Dehalogenase"/>
    <property type="match status" value="1"/>
</dbReference>
<dbReference type="SFLD" id="SFLDF00027">
    <property type="entry name" value="p-type_atpase"/>
    <property type="match status" value="1"/>
</dbReference>
<dbReference type="SUPFAM" id="SSF81653">
    <property type="entry name" value="Calcium ATPase, transduction domain A"/>
    <property type="match status" value="1"/>
</dbReference>
<dbReference type="SUPFAM" id="SSF81665">
    <property type="entry name" value="Calcium ATPase, transmembrane domain M"/>
    <property type="match status" value="1"/>
</dbReference>
<dbReference type="SUPFAM" id="SSF56784">
    <property type="entry name" value="HAD-like"/>
    <property type="match status" value="1"/>
</dbReference>
<dbReference type="SUPFAM" id="SSF81660">
    <property type="entry name" value="Metal cation-transporting ATPase, ATP-binding domain N"/>
    <property type="match status" value="1"/>
</dbReference>
<dbReference type="PROSITE" id="PS00154">
    <property type="entry name" value="ATPASE_E1_E2"/>
    <property type="match status" value="1"/>
</dbReference>